<name>RIMP_STRAW</name>
<dbReference type="EMBL" id="BA000030">
    <property type="protein sequence ID" value="BAC70265.1"/>
    <property type="molecule type" value="Genomic_DNA"/>
</dbReference>
<dbReference type="RefSeq" id="WP_010983990.1">
    <property type="nucleotide sequence ID" value="NZ_JZJK01000064.1"/>
</dbReference>
<dbReference type="SMR" id="Q82K50"/>
<dbReference type="GeneID" id="41539641"/>
<dbReference type="KEGG" id="sma:SAVERM_2554"/>
<dbReference type="eggNOG" id="COG0779">
    <property type="taxonomic scope" value="Bacteria"/>
</dbReference>
<dbReference type="HOGENOM" id="CLU_070525_3_0_11"/>
<dbReference type="OrthoDB" id="9805006at2"/>
<dbReference type="Proteomes" id="UP000000428">
    <property type="component" value="Chromosome"/>
</dbReference>
<dbReference type="GO" id="GO:0005829">
    <property type="term" value="C:cytosol"/>
    <property type="evidence" value="ECO:0007669"/>
    <property type="project" value="TreeGrafter"/>
</dbReference>
<dbReference type="GO" id="GO:0000028">
    <property type="term" value="P:ribosomal small subunit assembly"/>
    <property type="evidence" value="ECO:0007669"/>
    <property type="project" value="TreeGrafter"/>
</dbReference>
<dbReference type="GO" id="GO:0006412">
    <property type="term" value="P:translation"/>
    <property type="evidence" value="ECO:0007669"/>
    <property type="project" value="TreeGrafter"/>
</dbReference>
<dbReference type="CDD" id="cd01734">
    <property type="entry name" value="YlxS_C"/>
    <property type="match status" value="1"/>
</dbReference>
<dbReference type="Gene3D" id="3.30.300.70">
    <property type="entry name" value="RimP-like superfamily, N-terminal"/>
    <property type="match status" value="1"/>
</dbReference>
<dbReference type="HAMAP" id="MF_01077">
    <property type="entry name" value="RimP"/>
    <property type="match status" value="1"/>
</dbReference>
<dbReference type="InterPro" id="IPR003728">
    <property type="entry name" value="Ribosome_maturation_RimP"/>
</dbReference>
<dbReference type="InterPro" id="IPR028998">
    <property type="entry name" value="RimP_C"/>
</dbReference>
<dbReference type="InterPro" id="IPR028989">
    <property type="entry name" value="RimP_N"/>
</dbReference>
<dbReference type="InterPro" id="IPR035956">
    <property type="entry name" value="RimP_N_sf"/>
</dbReference>
<dbReference type="NCBIfam" id="NF000930">
    <property type="entry name" value="PRK00092.2-2"/>
    <property type="match status" value="1"/>
</dbReference>
<dbReference type="PANTHER" id="PTHR33867">
    <property type="entry name" value="RIBOSOME MATURATION FACTOR RIMP"/>
    <property type="match status" value="1"/>
</dbReference>
<dbReference type="PANTHER" id="PTHR33867:SF1">
    <property type="entry name" value="RIBOSOME MATURATION FACTOR RIMP"/>
    <property type="match status" value="1"/>
</dbReference>
<dbReference type="Pfam" id="PF17384">
    <property type="entry name" value="DUF150_C"/>
    <property type="match status" value="1"/>
</dbReference>
<dbReference type="Pfam" id="PF02576">
    <property type="entry name" value="RimP_N"/>
    <property type="match status" value="1"/>
</dbReference>
<dbReference type="SUPFAM" id="SSF75420">
    <property type="entry name" value="YhbC-like, N-terminal domain"/>
    <property type="match status" value="1"/>
</dbReference>
<evidence type="ECO:0000255" key="1">
    <source>
        <dbReference type="HAMAP-Rule" id="MF_01077"/>
    </source>
</evidence>
<keyword id="KW-0963">Cytoplasm</keyword>
<keyword id="KW-1185">Reference proteome</keyword>
<keyword id="KW-0690">Ribosome biogenesis</keyword>
<sequence>MSTTQSERLRELLEPLVGSQGLDLEGIEVESVGRKRVLRVVVDSDEGADLDAIADVSRALSAKLDETDAMGEGEYTLEVGTPGAERALTEHRHYVRAVDRLVRFQLTEGDELVARILTVDDAGLDLEVPGVKGRKATTRRLAFEDIAKARVQVEFNRKDKKDMTEEEEA</sequence>
<comment type="function">
    <text evidence="1">Required for maturation of 30S ribosomal subunits.</text>
</comment>
<comment type="subcellular location">
    <subcellularLocation>
        <location evidence="1">Cytoplasm</location>
    </subcellularLocation>
</comment>
<comment type="similarity">
    <text evidence="1">Belongs to the RimP family.</text>
</comment>
<reference key="1">
    <citation type="journal article" date="2001" name="Proc. Natl. Acad. Sci. U.S.A.">
        <title>Genome sequence of an industrial microorganism Streptomyces avermitilis: deducing the ability of producing secondary metabolites.</title>
        <authorList>
            <person name="Omura S."/>
            <person name="Ikeda H."/>
            <person name="Ishikawa J."/>
            <person name="Hanamoto A."/>
            <person name="Takahashi C."/>
            <person name="Shinose M."/>
            <person name="Takahashi Y."/>
            <person name="Horikawa H."/>
            <person name="Nakazawa H."/>
            <person name="Osonoe T."/>
            <person name="Kikuchi H."/>
            <person name="Shiba T."/>
            <person name="Sakaki Y."/>
            <person name="Hattori M."/>
        </authorList>
    </citation>
    <scope>NUCLEOTIDE SEQUENCE [LARGE SCALE GENOMIC DNA]</scope>
    <source>
        <strain>ATCC 31267 / DSM 46492 / JCM 5070 / NBRC 14893 / NCIMB 12804 / NRRL 8165 / MA-4680</strain>
    </source>
</reference>
<reference key="2">
    <citation type="journal article" date="2003" name="Nat. Biotechnol.">
        <title>Complete genome sequence and comparative analysis of the industrial microorganism Streptomyces avermitilis.</title>
        <authorList>
            <person name="Ikeda H."/>
            <person name="Ishikawa J."/>
            <person name="Hanamoto A."/>
            <person name="Shinose M."/>
            <person name="Kikuchi H."/>
            <person name="Shiba T."/>
            <person name="Sakaki Y."/>
            <person name="Hattori M."/>
            <person name="Omura S."/>
        </authorList>
    </citation>
    <scope>NUCLEOTIDE SEQUENCE [LARGE SCALE GENOMIC DNA]</scope>
    <source>
        <strain>ATCC 31267 / DSM 46492 / JCM 5070 / NBRC 14893 / NCIMB 12804 / NRRL 8165 / MA-4680</strain>
    </source>
</reference>
<feature type="chain" id="PRO_0000181931" description="Ribosome maturation factor RimP">
    <location>
        <begin position="1"/>
        <end position="169"/>
    </location>
</feature>
<protein>
    <recommendedName>
        <fullName evidence="1">Ribosome maturation factor RimP</fullName>
    </recommendedName>
</protein>
<gene>
    <name evidence="1" type="primary">rimP</name>
    <name type="ordered locus">SAV_2554</name>
</gene>
<accession>Q82K50</accession>
<proteinExistence type="inferred from homology"/>
<organism>
    <name type="scientific">Streptomyces avermitilis (strain ATCC 31267 / DSM 46492 / JCM 5070 / NBRC 14893 / NCIMB 12804 / NRRL 8165 / MA-4680)</name>
    <dbReference type="NCBI Taxonomy" id="227882"/>
    <lineage>
        <taxon>Bacteria</taxon>
        <taxon>Bacillati</taxon>
        <taxon>Actinomycetota</taxon>
        <taxon>Actinomycetes</taxon>
        <taxon>Kitasatosporales</taxon>
        <taxon>Streptomycetaceae</taxon>
        <taxon>Streptomyces</taxon>
    </lineage>
</organism>